<name>PTFC_SHIFL</name>
<evidence type="ECO:0000250" key="1"/>
<evidence type="ECO:0000255" key="2"/>
<evidence type="ECO:0000255" key="3">
    <source>
        <dbReference type="PROSITE-ProRule" id="PRU00427"/>
    </source>
</evidence>
<evidence type="ECO:0000305" key="4"/>
<reference key="1">
    <citation type="journal article" date="2002" name="Nucleic Acids Res.">
        <title>Genome sequence of Shigella flexneri 2a: insights into pathogenicity through comparison with genomes of Escherichia coli K12 and O157.</title>
        <authorList>
            <person name="Jin Q."/>
            <person name="Yuan Z."/>
            <person name="Xu J."/>
            <person name="Wang Y."/>
            <person name="Shen Y."/>
            <person name="Lu W."/>
            <person name="Wang J."/>
            <person name="Liu H."/>
            <person name="Yang J."/>
            <person name="Yang F."/>
            <person name="Zhang X."/>
            <person name="Zhang J."/>
            <person name="Yang G."/>
            <person name="Wu H."/>
            <person name="Qu D."/>
            <person name="Dong J."/>
            <person name="Sun L."/>
            <person name="Xue Y."/>
            <person name="Zhao A."/>
            <person name="Gao Y."/>
            <person name="Zhu J."/>
            <person name="Kan B."/>
            <person name="Ding K."/>
            <person name="Chen S."/>
            <person name="Cheng H."/>
            <person name="Yao Z."/>
            <person name="He B."/>
            <person name="Chen R."/>
            <person name="Ma D."/>
            <person name="Qiang B."/>
            <person name="Wen Y."/>
            <person name="Hou Y."/>
            <person name="Yu J."/>
        </authorList>
    </citation>
    <scope>NUCLEOTIDE SEQUENCE [LARGE SCALE GENOMIC DNA]</scope>
    <source>
        <strain>301 / Serotype 2a</strain>
    </source>
</reference>
<reference key="2">
    <citation type="journal article" date="2003" name="Infect. Immun.">
        <title>Complete genome sequence and comparative genomics of Shigella flexneri serotype 2a strain 2457T.</title>
        <authorList>
            <person name="Wei J."/>
            <person name="Goldberg M.B."/>
            <person name="Burland V."/>
            <person name="Venkatesan M.M."/>
            <person name="Deng W."/>
            <person name="Fournier G."/>
            <person name="Mayhew G.F."/>
            <person name="Plunkett G. III"/>
            <person name="Rose D.J."/>
            <person name="Darling A."/>
            <person name="Mau B."/>
            <person name="Perna N.T."/>
            <person name="Payne S.M."/>
            <person name="Runyen-Janecky L.J."/>
            <person name="Zhou S."/>
            <person name="Schwartz D.C."/>
            <person name="Blattner F.R."/>
        </authorList>
    </citation>
    <scope>NUCLEOTIDE SEQUENCE [LARGE SCALE GENOMIC DNA]</scope>
    <source>
        <strain>ATCC 700930 / 2457T / Serotype 2a</strain>
    </source>
</reference>
<comment type="function">
    <text evidence="1">The phosphoenolpyruvate-dependent sugar phosphotransferase system (PTS), a major carbohydrate active -transport system, catalyzes the phosphorylation of incoming sugar substrates concomitant with their translocation across the cell membrane.</text>
</comment>
<comment type="subcellular location">
    <subcellularLocation>
        <location evidence="3">Cell inner membrane</location>
        <topology evidence="3">Multi-pass membrane protein</topology>
    </subcellularLocation>
</comment>
<comment type="domain">
    <text>The EIIC domain forms the PTS system translocation channel and contains the specific substrate-binding site.</text>
</comment>
<keyword id="KW-0997">Cell inner membrane</keyword>
<keyword id="KW-1003">Cell membrane</keyword>
<keyword id="KW-0472">Membrane</keyword>
<keyword id="KW-0597">Phosphoprotein</keyword>
<keyword id="KW-0598">Phosphotransferase system</keyword>
<keyword id="KW-1185">Reference proteome</keyword>
<keyword id="KW-0762">Sugar transport</keyword>
<keyword id="KW-0808">Transferase</keyword>
<keyword id="KW-0812">Transmembrane</keyword>
<keyword id="KW-1133">Transmembrane helix</keyword>
<keyword id="KW-0813">Transport</keyword>
<feature type="chain" id="PRO_0000186707" description="Fructose-like permease IIC component">
    <location>
        <begin position="1"/>
        <end position="415"/>
    </location>
</feature>
<feature type="topological domain" description="Cytoplasmic" evidence="2">
    <location>
        <begin position="1"/>
        <end position="46"/>
    </location>
</feature>
<feature type="transmembrane region" description="Helical" evidence="3">
    <location>
        <begin position="47"/>
        <end position="67"/>
    </location>
</feature>
<feature type="topological domain" description="Periplasmic" evidence="2">
    <location>
        <begin position="68"/>
        <end position="101"/>
    </location>
</feature>
<feature type="transmembrane region" description="Helical" evidence="3">
    <location>
        <begin position="102"/>
        <end position="122"/>
    </location>
</feature>
<feature type="topological domain" description="Cytoplasmic" evidence="2">
    <location>
        <begin position="123"/>
        <end position="126"/>
    </location>
</feature>
<feature type="transmembrane region" description="Helical" evidence="3">
    <location>
        <begin position="127"/>
        <end position="147"/>
    </location>
</feature>
<feature type="topological domain" description="Periplasmic" evidence="2">
    <location>
        <begin position="148"/>
        <end position="157"/>
    </location>
</feature>
<feature type="transmembrane region" description="Helical" evidence="3">
    <location>
        <begin position="158"/>
        <end position="178"/>
    </location>
</feature>
<feature type="topological domain" description="Cytoplasmic" evidence="2">
    <location>
        <begin position="179"/>
        <end position="197"/>
    </location>
</feature>
<feature type="transmembrane region" description="Helical" evidence="3">
    <location>
        <begin position="198"/>
        <end position="218"/>
    </location>
</feature>
<feature type="topological domain" description="Periplasmic" evidence="2">
    <location>
        <begin position="219"/>
        <end position="237"/>
    </location>
</feature>
<feature type="transmembrane region" description="Helical" evidence="3">
    <location>
        <begin position="238"/>
        <end position="258"/>
    </location>
</feature>
<feature type="topological domain" description="Cytoplasmic" evidence="2">
    <location>
        <begin position="259"/>
        <end position="276"/>
    </location>
</feature>
<feature type="transmembrane region" description="Helical" evidence="3">
    <location>
        <begin position="277"/>
        <end position="297"/>
    </location>
</feature>
<feature type="topological domain" description="Periplasmic" evidence="2">
    <location>
        <begin position="298"/>
        <end position="318"/>
    </location>
</feature>
<feature type="transmembrane region" description="Helical" evidence="3">
    <location>
        <begin position="319"/>
        <end position="339"/>
    </location>
</feature>
<feature type="topological domain" description="Cytoplasmic" evidence="2">
    <location>
        <begin position="340"/>
        <end position="341"/>
    </location>
</feature>
<feature type="transmembrane region" description="Helical" evidence="3">
    <location>
        <begin position="342"/>
        <end position="362"/>
    </location>
</feature>
<feature type="topological domain" description="Periplasmic" evidence="2">
    <location>
        <begin position="363"/>
        <end position="378"/>
    </location>
</feature>
<feature type="transmembrane region" description="Helical" evidence="3">
    <location>
        <begin position="379"/>
        <end position="399"/>
    </location>
</feature>
<feature type="topological domain" description="Cytoplasmic" evidence="2">
    <location>
        <begin position="400"/>
        <end position="415"/>
    </location>
</feature>
<feature type="domain" description="PTS EIIC type-2" evidence="3">
    <location>
        <begin position="35"/>
        <end position="415"/>
    </location>
</feature>
<feature type="sequence conflict" description="In Ref. 2; AAP17771." evidence="4" ref="2">
    <original>L</original>
    <variation>P</variation>
    <location>
        <position position="24"/>
    </location>
</feature>
<proteinExistence type="inferred from homology"/>
<accession>Q83QP2</accession>
<gene>
    <name type="primary">fryC</name>
    <name type="ordered locus">SF2452</name>
    <name type="ordered locus">S2591</name>
</gene>
<protein>
    <recommendedName>
        <fullName>Fructose-like permease IIC component</fullName>
    </recommendedName>
    <alternativeName>
        <fullName>PTS system fructose-like EIIC component</fullName>
    </alternativeName>
</protein>
<dbReference type="EMBL" id="AE005674">
    <property type="protein sequence ID" value="AAN43960.1"/>
    <property type="molecule type" value="Genomic_DNA"/>
</dbReference>
<dbReference type="EMBL" id="AE014073">
    <property type="protein sequence ID" value="AAP17771.1"/>
    <property type="molecule type" value="Genomic_DNA"/>
</dbReference>
<dbReference type="RefSeq" id="NP_708253.1">
    <property type="nucleotide sequence ID" value="NC_004337.2"/>
</dbReference>
<dbReference type="RefSeq" id="WP_000985315.1">
    <property type="nucleotide sequence ID" value="NZ_CP123365.1"/>
</dbReference>
<dbReference type="STRING" id="198214.SF2452"/>
<dbReference type="PaxDb" id="198214-SF2452"/>
<dbReference type="GeneID" id="1025577"/>
<dbReference type="KEGG" id="sfl:SF2452"/>
<dbReference type="KEGG" id="sfx:S2591"/>
<dbReference type="PATRIC" id="fig|198214.7.peg.2930"/>
<dbReference type="HOGENOM" id="CLU_013155_0_2_6"/>
<dbReference type="Proteomes" id="UP000001006">
    <property type="component" value="Chromosome"/>
</dbReference>
<dbReference type="Proteomes" id="UP000002673">
    <property type="component" value="Chromosome"/>
</dbReference>
<dbReference type="GO" id="GO:0005886">
    <property type="term" value="C:plasma membrane"/>
    <property type="evidence" value="ECO:0007669"/>
    <property type="project" value="UniProtKB-SubCell"/>
</dbReference>
<dbReference type="GO" id="GO:0008982">
    <property type="term" value="F:protein-N(PI)-phosphohistidine-sugar phosphotransferase activity"/>
    <property type="evidence" value="ECO:0007669"/>
    <property type="project" value="InterPro"/>
</dbReference>
<dbReference type="GO" id="GO:0090563">
    <property type="term" value="F:protein-phosphocysteine-sugar phosphotransferase activity"/>
    <property type="evidence" value="ECO:0007669"/>
    <property type="project" value="TreeGrafter"/>
</dbReference>
<dbReference type="GO" id="GO:0009401">
    <property type="term" value="P:phosphoenolpyruvate-dependent sugar phosphotransferase system"/>
    <property type="evidence" value="ECO:0007669"/>
    <property type="project" value="UniProtKB-KW"/>
</dbReference>
<dbReference type="InterPro" id="IPR050864">
    <property type="entry name" value="Bacterial_PTS_Sugar_Transport"/>
</dbReference>
<dbReference type="InterPro" id="IPR003352">
    <property type="entry name" value="PTS_EIIC"/>
</dbReference>
<dbReference type="InterPro" id="IPR013014">
    <property type="entry name" value="PTS_EIIC_2"/>
</dbReference>
<dbReference type="PANTHER" id="PTHR30505">
    <property type="entry name" value="FRUCTOSE-LIKE PERMEASE"/>
    <property type="match status" value="1"/>
</dbReference>
<dbReference type="PANTHER" id="PTHR30505:SF0">
    <property type="entry name" value="FRUCTOSE-LIKE PTS SYSTEM EIIBC COMPONENT-RELATED"/>
    <property type="match status" value="1"/>
</dbReference>
<dbReference type="Pfam" id="PF02378">
    <property type="entry name" value="PTS_EIIC"/>
    <property type="match status" value="1"/>
</dbReference>
<dbReference type="PROSITE" id="PS51104">
    <property type="entry name" value="PTS_EIIC_TYPE_2"/>
    <property type="match status" value="1"/>
</dbReference>
<organism>
    <name type="scientific">Shigella flexneri</name>
    <dbReference type="NCBI Taxonomy" id="623"/>
    <lineage>
        <taxon>Bacteria</taxon>
        <taxon>Pseudomonadati</taxon>
        <taxon>Pseudomonadota</taxon>
        <taxon>Gammaproteobacteria</taxon>
        <taxon>Enterobacterales</taxon>
        <taxon>Enterobacteriaceae</taxon>
        <taxon>Shigella</taxon>
    </lineage>
</organism>
<sequence>MAIKKRSATVVPGASGAAAAVKNLQASKSSFWGELPQHVMSGISRMVPTLIMGGVILAFSQLIAYSWLKIPAEIGIMDALNSGKFSGFDLSLLKFAWLSQSFGGVLFGFAIPMFAAFVANSIGGKLAFPAGFIGGLMSTQPTQLLNFDPSTMQWATSSPVPSTFIGALIISIVAGYLVKWMNQKIQLPDFLLAFKTTFLLPILSAIFVMLAMYYVITPFGGWINGGIRTVLTAAGEKGALMYAMGIAAATAIDLGGPINKAAGFVAFSFTTDHVLPVTARSIAIVIPPIGLGLATIIDRRLTGKRLFNAQLYPQGKTAMFLAFMGISEGAIPFALESPITAIPSYMVGAIVGSTAAVWLGAVQWFPESAIWAWPLVTNLGVYMAGIALGAIITALMVVFLRLMMFRKGKLLIDSL</sequence>